<reference key="1">
    <citation type="journal article" date="2002" name="Nature">
        <title>Sequence and analysis of chromosome 2 of Dictyostelium discoideum.</title>
        <authorList>
            <person name="Gloeckner G."/>
            <person name="Eichinger L."/>
            <person name="Szafranski K."/>
            <person name="Pachebat J.A."/>
            <person name="Bankier A.T."/>
            <person name="Dear P.H."/>
            <person name="Lehmann R."/>
            <person name="Baumgart C."/>
            <person name="Parra G."/>
            <person name="Abril J.F."/>
            <person name="Guigo R."/>
            <person name="Kumpf K."/>
            <person name="Tunggal B."/>
            <person name="Cox E.C."/>
            <person name="Quail M.A."/>
            <person name="Platzer M."/>
            <person name="Rosenthal A."/>
            <person name="Noegel A.A."/>
        </authorList>
    </citation>
    <scope>NUCLEOTIDE SEQUENCE [LARGE SCALE GENOMIC DNA]</scope>
    <source>
        <strain>AX4</strain>
    </source>
</reference>
<reference key="2">
    <citation type="journal article" date="2005" name="Nature">
        <title>The genome of the social amoeba Dictyostelium discoideum.</title>
        <authorList>
            <person name="Eichinger L."/>
            <person name="Pachebat J.A."/>
            <person name="Gloeckner G."/>
            <person name="Rajandream M.A."/>
            <person name="Sucgang R."/>
            <person name="Berriman M."/>
            <person name="Song J."/>
            <person name="Olsen R."/>
            <person name="Szafranski K."/>
            <person name="Xu Q."/>
            <person name="Tunggal B."/>
            <person name="Kummerfeld S."/>
            <person name="Madera M."/>
            <person name="Konfortov B.A."/>
            <person name="Rivero F."/>
            <person name="Bankier A.T."/>
            <person name="Lehmann R."/>
            <person name="Hamlin N."/>
            <person name="Davies R."/>
            <person name="Gaudet P."/>
            <person name="Fey P."/>
            <person name="Pilcher K."/>
            <person name="Chen G."/>
            <person name="Saunders D."/>
            <person name="Sodergren E.J."/>
            <person name="Davis P."/>
            <person name="Kerhornou A."/>
            <person name="Nie X."/>
            <person name="Hall N."/>
            <person name="Anjard C."/>
            <person name="Hemphill L."/>
            <person name="Bason N."/>
            <person name="Farbrother P."/>
            <person name="Desany B."/>
            <person name="Just E."/>
            <person name="Morio T."/>
            <person name="Rost R."/>
            <person name="Churcher C.M."/>
            <person name="Cooper J."/>
            <person name="Haydock S."/>
            <person name="van Driessche N."/>
            <person name="Cronin A."/>
            <person name="Goodhead I."/>
            <person name="Muzny D.M."/>
            <person name="Mourier T."/>
            <person name="Pain A."/>
            <person name="Lu M."/>
            <person name="Harper D."/>
            <person name="Lindsay R."/>
            <person name="Hauser H."/>
            <person name="James K.D."/>
            <person name="Quiles M."/>
            <person name="Madan Babu M."/>
            <person name="Saito T."/>
            <person name="Buchrieser C."/>
            <person name="Wardroper A."/>
            <person name="Felder M."/>
            <person name="Thangavelu M."/>
            <person name="Johnson D."/>
            <person name="Knights A."/>
            <person name="Loulseged H."/>
            <person name="Mungall K.L."/>
            <person name="Oliver K."/>
            <person name="Price C."/>
            <person name="Quail M.A."/>
            <person name="Urushihara H."/>
            <person name="Hernandez J."/>
            <person name="Rabbinowitsch E."/>
            <person name="Steffen D."/>
            <person name="Sanders M."/>
            <person name="Ma J."/>
            <person name="Kohara Y."/>
            <person name="Sharp S."/>
            <person name="Simmonds M.N."/>
            <person name="Spiegler S."/>
            <person name="Tivey A."/>
            <person name="Sugano S."/>
            <person name="White B."/>
            <person name="Walker D."/>
            <person name="Woodward J.R."/>
            <person name="Winckler T."/>
            <person name="Tanaka Y."/>
            <person name="Shaulsky G."/>
            <person name="Schleicher M."/>
            <person name="Weinstock G.M."/>
            <person name="Rosenthal A."/>
            <person name="Cox E.C."/>
            <person name="Chisholm R.L."/>
            <person name="Gibbs R.A."/>
            <person name="Loomis W.F."/>
            <person name="Platzer M."/>
            <person name="Kay R.R."/>
            <person name="Williams J.G."/>
            <person name="Dear P.H."/>
            <person name="Noegel A.A."/>
            <person name="Barrell B.G."/>
            <person name="Kuspa A."/>
        </authorList>
    </citation>
    <scope>NUCLEOTIDE SEQUENCE [LARGE SCALE GENOMIC DNA]</scope>
    <source>
        <strain>AX4</strain>
    </source>
</reference>
<dbReference type="EC" id="3.6.4.-"/>
<dbReference type="EMBL" id="AAFI02000012">
    <property type="protein sequence ID" value="EAL70092.1"/>
    <property type="molecule type" value="Genomic_DNA"/>
</dbReference>
<dbReference type="RefSeq" id="XP_644230.1">
    <property type="nucleotide sequence ID" value="XM_639138.1"/>
</dbReference>
<dbReference type="SMR" id="Q86AS0"/>
<dbReference type="STRING" id="44689.Q86AS0"/>
<dbReference type="PaxDb" id="44689-DDB0237968"/>
<dbReference type="EnsemblProtists" id="EAL70092">
    <property type="protein sequence ID" value="EAL70092"/>
    <property type="gene ID" value="DDB_G0274399"/>
</dbReference>
<dbReference type="GeneID" id="8619659"/>
<dbReference type="KEGG" id="ddi:DDB_G0274399"/>
<dbReference type="dictyBase" id="DDB_G0274399"/>
<dbReference type="VEuPathDB" id="AmoebaDB:DDB_G0274399"/>
<dbReference type="eggNOG" id="KOG1801">
    <property type="taxonomic scope" value="Eukaryota"/>
</dbReference>
<dbReference type="HOGENOM" id="CLU_001666_11_2_1"/>
<dbReference type="InParanoid" id="Q86AS0"/>
<dbReference type="OMA" id="DWWTTKL"/>
<dbReference type="PhylomeDB" id="Q86AS0"/>
<dbReference type="PRO" id="PR:Q86AS0"/>
<dbReference type="Proteomes" id="UP000002195">
    <property type="component" value="Chromosome 2"/>
</dbReference>
<dbReference type="GO" id="GO:0016604">
    <property type="term" value="C:nuclear body"/>
    <property type="evidence" value="ECO:0000318"/>
    <property type="project" value="GO_Central"/>
</dbReference>
<dbReference type="GO" id="GO:0005524">
    <property type="term" value="F:ATP binding"/>
    <property type="evidence" value="ECO:0007669"/>
    <property type="project" value="UniProtKB-KW"/>
</dbReference>
<dbReference type="GO" id="GO:0004386">
    <property type="term" value="F:helicase activity"/>
    <property type="evidence" value="ECO:0007669"/>
    <property type="project" value="UniProtKB-KW"/>
</dbReference>
<dbReference type="GO" id="GO:0016787">
    <property type="term" value="F:hydrolase activity"/>
    <property type="evidence" value="ECO:0007669"/>
    <property type="project" value="UniProtKB-KW"/>
</dbReference>
<dbReference type="GO" id="GO:0003723">
    <property type="term" value="F:RNA binding"/>
    <property type="evidence" value="ECO:0000318"/>
    <property type="project" value="GO_Central"/>
</dbReference>
<dbReference type="GO" id="GO:0001147">
    <property type="term" value="F:transcription termination site sequence-specific DNA binding"/>
    <property type="evidence" value="ECO:0000318"/>
    <property type="project" value="GO_Central"/>
</dbReference>
<dbReference type="GO" id="GO:0006369">
    <property type="term" value="P:termination of RNA polymerase II transcription"/>
    <property type="evidence" value="ECO:0000318"/>
    <property type="project" value="GO_Central"/>
</dbReference>
<dbReference type="CDD" id="cd18042">
    <property type="entry name" value="DEXXQc_SETX"/>
    <property type="match status" value="1"/>
</dbReference>
<dbReference type="CDD" id="cd18808">
    <property type="entry name" value="SF1_C_Upf1"/>
    <property type="match status" value="1"/>
</dbReference>
<dbReference type="FunFam" id="3.40.50.300:FF:000326">
    <property type="entry name" value="P-loop containing nucleoside triphosphate hydrolase"/>
    <property type="match status" value="1"/>
</dbReference>
<dbReference type="Gene3D" id="3.40.50.300">
    <property type="entry name" value="P-loop containing nucleotide triphosphate hydrolases"/>
    <property type="match status" value="2"/>
</dbReference>
<dbReference type="InterPro" id="IPR045055">
    <property type="entry name" value="DNA2/NAM7-like"/>
</dbReference>
<dbReference type="InterPro" id="IPR041679">
    <property type="entry name" value="DNA2/NAM7-like_C"/>
</dbReference>
<dbReference type="InterPro" id="IPR041677">
    <property type="entry name" value="DNA2/NAM7_AAA_11"/>
</dbReference>
<dbReference type="InterPro" id="IPR027417">
    <property type="entry name" value="P-loop_NTPase"/>
</dbReference>
<dbReference type="InterPro" id="IPR047187">
    <property type="entry name" value="SF1_C_Upf1"/>
</dbReference>
<dbReference type="PANTHER" id="PTHR10887">
    <property type="entry name" value="DNA2/NAM7 HELICASE FAMILY"/>
    <property type="match status" value="1"/>
</dbReference>
<dbReference type="PANTHER" id="PTHR10887:SF495">
    <property type="entry name" value="HELICASE SENATAXIN ISOFORM X1-RELATED"/>
    <property type="match status" value="1"/>
</dbReference>
<dbReference type="Pfam" id="PF13086">
    <property type="entry name" value="AAA_11"/>
    <property type="match status" value="2"/>
</dbReference>
<dbReference type="Pfam" id="PF13087">
    <property type="entry name" value="AAA_12"/>
    <property type="match status" value="1"/>
</dbReference>
<dbReference type="SUPFAM" id="SSF52540">
    <property type="entry name" value="P-loop containing nucleoside triphosphate hydrolases"/>
    <property type="match status" value="1"/>
</dbReference>
<organism>
    <name type="scientific">Dictyostelium discoideum</name>
    <name type="common">Social amoeba</name>
    <dbReference type="NCBI Taxonomy" id="44689"/>
    <lineage>
        <taxon>Eukaryota</taxon>
        <taxon>Amoebozoa</taxon>
        <taxon>Evosea</taxon>
        <taxon>Eumycetozoa</taxon>
        <taxon>Dictyostelia</taxon>
        <taxon>Dictyosteliales</taxon>
        <taxon>Dictyosteliaceae</taxon>
        <taxon>Dictyostelium</taxon>
    </lineage>
</organism>
<evidence type="ECO:0000250" key="1"/>
<evidence type="ECO:0000255" key="2"/>
<evidence type="ECO:0000256" key="3">
    <source>
        <dbReference type="SAM" id="MobiDB-lite"/>
    </source>
</evidence>
<evidence type="ECO:0000305" key="4"/>
<accession>Q86AS0</accession>
<accession>Q554U3</accession>
<sequence>MTTIVAPPIKSITSIDNDDNVDGVIEKSVKKPVSLTFDQIIDRFYKHILTWDASDLSPKEKELKPVKVSFNNEEDYITTYEPLLFEECRAQLERSIEEGEKDDTSEPTLSRVRYISEVNDFLVVGLVMAENVNIFQFHDNDLIMISLHHPLIVFGMDEDEEMTDDEDTAPTSAATHVGAPTKSTTTTTTTTTTTTTTTTTATTNIIDDPNKTTEDIKKKKKVIPPSKTPITEQNRTLHLIGTVEHLDNGGIKVKFYVKGIKGDRARQVSLLLRYEIDWWTTKLCNLSTLQREFAALYQCSQSNFMKTLMMRDDDGEDGIVMKIPPLLHDQFSSTYNDSQLNALTSALEGNAITLIQGPPGTGKTHVILGLISVLLHSTIVPKVKSGGNNLGDHLLKDRELSMAEKRDLWNISQPWFNKEFPHIRDNYELIDYDFEERDQKRKRDLWRKLRDTGSVKGGSTKRRILLCAPSNGAVDEIVSRLIRDGLLNADGRKYNPNLVRVGPGSHSDVESVSLDYMVRCRQQLMNSNSAIPSSSASTAAATSGSSRSTQDTSSIRTLVLDEADIVATTLSFSGASLLTKMAGGFDIVIIDEAAQAVETSTLIPIQHGCKKVVLVGDPKQLPATIISPLAIKYKYDQSLFQRLQEKNSPHMLTTQYRMHSLIRAFPSRHFYQDLLLDGPNIPSRATHYHSNPFFGPLVFYDLSWSTETKPGGGSVFNEHECKMAMYLFQLFTKVYPDEDFASRIGIISPYRQQVLALREIFKNYPGISIDTVDGFQGREREIIIFSCVRAPVEEGAGIGFLSDVRRMNVALTRPRSSLLILGNTKALSINKDWNELIQHTQNNQQLIPVTKDQPLEIIIPTFTTRELFTELSEKGQQIVIPKPRTEEEINLQKQKDIEKRKKQHKRQKQKSKENDKKKQLKKRKELNNNDNNNNNKESSNKEVQEITNAEVVKDTEINNTKRARTRR</sequence>
<name>Y4399_DICDI</name>
<gene>
    <name type="ORF">DDB_G0274399</name>
</gene>
<comment type="subcellular location">
    <subcellularLocation>
        <location evidence="4">Nucleus</location>
    </subcellularLocation>
</comment>
<comment type="similarity">
    <text evidence="4">Belongs to the DNA2/NAM7 helicase family.</text>
</comment>
<feature type="chain" id="PRO_0000363160" description="Probable helicase DDB_G0274399">
    <location>
        <begin position="1"/>
        <end position="967"/>
    </location>
</feature>
<feature type="region of interest" description="Disordered" evidence="3">
    <location>
        <begin position="161"/>
        <end position="192"/>
    </location>
</feature>
<feature type="region of interest" description="Disordered" evidence="3">
    <location>
        <begin position="529"/>
        <end position="553"/>
    </location>
</feature>
<feature type="region of interest" description="Disordered" evidence="3">
    <location>
        <begin position="892"/>
        <end position="967"/>
    </location>
</feature>
<feature type="coiled-coil region" evidence="2">
    <location>
        <begin position="890"/>
        <end position="949"/>
    </location>
</feature>
<feature type="compositionally biased region" description="Basic residues" evidence="3">
    <location>
        <begin position="900"/>
        <end position="909"/>
    </location>
</feature>
<feature type="compositionally biased region" description="Low complexity" evidence="3">
    <location>
        <begin position="928"/>
        <end position="937"/>
    </location>
</feature>
<feature type="binding site" evidence="1">
    <location>
        <begin position="357"/>
        <end position="364"/>
    </location>
    <ligand>
        <name>ATP</name>
        <dbReference type="ChEBI" id="CHEBI:30616"/>
    </ligand>
</feature>
<proteinExistence type="inferred from homology"/>
<keyword id="KW-0067">ATP-binding</keyword>
<keyword id="KW-0175">Coiled coil</keyword>
<keyword id="KW-0347">Helicase</keyword>
<keyword id="KW-0378">Hydrolase</keyword>
<keyword id="KW-0547">Nucleotide-binding</keyword>
<keyword id="KW-0539">Nucleus</keyword>
<keyword id="KW-1185">Reference proteome</keyword>
<protein>
    <recommendedName>
        <fullName>Probable helicase DDB_G0274399</fullName>
        <ecNumber>3.6.4.-</ecNumber>
    </recommendedName>
</protein>